<dbReference type="EC" id="2.4.2.43" evidence="1"/>
<dbReference type="EMBL" id="CP000821">
    <property type="protein sequence ID" value="ABV35533.1"/>
    <property type="molecule type" value="Genomic_DNA"/>
</dbReference>
<dbReference type="RefSeq" id="WP_012141269.1">
    <property type="nucleotide sequence ID" value="NC_009831.1"/>
</dbReference>
<dbReference type="SMR" id="A8FRR0"/>
<dbReference type="STRING" id="425104.Ssed_0922"/>
<dbReference type="CAZy" id="GT83">
    <property type="family name" value="Glycosyltransferase Family 83"/>
</dbReference>
<dbReference type="KEGG" id="sse:Ssed_0922"/>
<dbReference type="eggNOG" id="COG1807">
    <property type="taxonomic scope" value="Bacteria"/>
</dbReference>
<dbReference type="HOGENOM" id="CLU_019200_2_1_6"/>
<dbReference type="OrthoDB" id="9775035at2"/>
<dbReference type="UniPathway" id="UPA00037"/>
<dbReference type="Proteomes" id="UP000002015">
    <property type="component" value="Chromosome"/>
</dbReference>
<dbReference type="GO" id="GO:0005886">
    <property type="term" value="C:plasma membrane"/>
    <property type="evidence" value="ECO:0007669"/>
    <property type="project" value="UniProtKB-SubCell"/>
</dbReference>
<dbReference type="GO" id="GO:0103015">
    <property type="term" value="F:4-amino-4-deoxy-L-arabinose transferase activity"/>
    <property type="evidence" value="ECO:0007669"/>
    <property type="project" value="UniProtKB-EC"/>
</dbReference>
<dbReference type="GO" id="GO:0000030">
    <property type="term" value="F:mannosyltransferase activity"/>
    <property type="evidence" value="ECO:0007669"/>
    <property type="project" value="InterPro"/>
</dbReference>
<dbReference type="GO" id="GO:0009245">
    <property type="term" value="P:lipid A biosynthetic process"/>
    <property type="evidence" value="ECO:0007669"/>
    <property type="project" value="UniProtKB-UniRule"/>
</dbReference>
<dbReference type="GO" id="GO:0009103">
    <property type="term" value="P:lipopolysaccharide biosynthetic process"/>
    <property type="evidence" value="ECO:0007669"/>
    <property type="project" value="UniProtKB-KW"/>
</dbReference>
<dbReference type="GO" id="GO:0006493">
    <property type="term" value="P:protein O-linked glycosylation"/>
    <property type="evidence" value="ECO:0007669"/>
    <property type="project" value="InterPro"/>
</dbReference>
<dbReference type="GO" id="GO:0010041">
    <property type="term" value="P:response to iron(III) ion"/>
    <property type="evidence" value="ECO:0007669"/>
    <property type="project" value="TreeGrafter"/>
</dbReference>
<dbReference type="HAMAP" id="MF_01165">
    <property type="entry name" value="ArnT_transfer"/>
    <property type="match status" value="1"/>
</dbReference>
<dbReference type="InterPro" id="IPR022839">
    <property type="entry name" value="ArnT_tfrase"/>
</dbReference>
<dbReference type="InterPro" id="IPR003342">
    <property type="entry name" value="Glyco_trans_39/83"/>
</dbReference>
<dbReference type="InterPro" id="IPR050297">
    <property type="entry name" value="LipidA_mod_glycosyltrf_83"/>
</dbReference>
<dbReference type="NCBIfam" id="NF009784">
    <property type="entry name" value="PRK13279.1"/>
    <property type="match status" value="1"/>
</dbReference>
<dbReference type="PANTHER" id="PTHR33908">
    <property type="entry name" value="MANNOSYLTRANSFERASE YKCB-RELATED"/>
    <property type="match status" value="1"/>
</dbReference>
<dbReference type="PANTHER" id="PTHR33908:SF3">
    <property type="entry name" value="UNDECAPRENYL PHOSPHATE-ALPHA-4-AMINO-4-DEOXY-L-ARABINOSE ARABINOSYL TRANSFERASE"/>
    <property type="match status" value="1"/>
</dbReference>
<dbReference type="Pfam" id="PF02366">
    <property type="entry name" value="PMT"/>
    <property type="match status" value="1"/>
</dbReference>
<gene>
    <name evidence="1" type="primary">arnT</name>
    <name type="ordered locus">Ssed_0922</name>
</gene>
<feature type="chain" id="PRO_0000380035" description="Undecaprenyl phosphate-alpha-4-amino-4-deoxy-L-arabinose arabinosyl transferase">
    <location>
        <begin position="1"/>
        <end position="546"/>
    </location>
</feature>
<feature type="transmembrane region" description="Helical" evidence="1">
    <location>
        <begin position="6"/>
        <end position="26"/>
    </location>
</feature>
<feature type="transmembrane region" description="Helical" evidence="1">
    <location>
        <begin position="87"/>
        <end position="107"/>
    </location>
</feature>
<feature type="transmembrane region" description="Helical" evidence="1">
    <location>
        <begin position="113"/>
        <end position="133"/>
    </location>
</feature>
<feature type="transmembrane region" description="Helical" evidence="1">
    <location>
        <begin position="177"/>
        <end position="197"/>
    </location>
</feature>
<feature type="transmembrane region" description="Helical" evidence="1">
    <location>
        <begin position="208"/>
        <end position="228"/>
    </location>
</feature>
<feature type="transmembrane region" description="Helical" evidence="1">
    <location>
        <begin position="260"/>
        <end position="280"/>
    </location>
</feature>
<feature type="transmembrane region" description="Helical" evidence="1">
    <location>
        <begin position="289"/>
        <end position="309"/>
    </location>
</feature>
<feature type="transmembrane region" description="Helical" evidence="1">
    <location>
        <begin position="313"/>
        <end position="333"/>
    </location>
</feature>
<feature type="transmembrane region" description="Helical" evidence="1">
    <location>
        <begin position="345"/>
        <end position="365"/>
    </location>
</feature>
<feature type="transmembrane region" description="Helical" evidence="1">
    <location>
        <begin position="380"/>
        <end position="400"/>
    </location>
</feature>
<feature type="transmembrane region" description="Helical" evidence="1">
    <location>
        <begin position="410"/>
        <end position="430"/>
    </location>
</feature>
<feature type="transmembrane region" description="Helical" evidence="1">
    <location>
        <begin position="450"/>
        <end position="467"/>
    </location>
</feature>
<reference key="1">
    <citation type="submission" date="2007-08" db="EMBL/GenBank/DDBJ databases">
        <title>Complete sequence of Shewanella sediminis HAW-EB3.</title>
        <authorList>
            <consortium name="US DOE Joint Genome Institute"/>
            <person name="Copeland A."/>
            <person name="Lucas S."/>
            <person name="Lapidus A."/>
            <person name="Barry K."/>
            <person name="Glavina del Rio T."/>
            <person name="Dalin E."/>
            <person name="Tice H."/>
            <person name="Pitluck S."/>
            <person name="Chertkov O."/>
            <person name="Brettin T."/>
            <person name="Bruce D."/>
            <person name="Detter J.C."/>
            <person name="Han C."/>
            <person name="Schmutz J."/>
            <person name="Larimer F."/>
            <person name="Land M."/>
            <person name="Hauser L."/>
            <person name="Kyrpides N."/>
            <person name="Kim E."/>
            <person name="Zhao J.-S."/>
            <person name="Richardson P."/>
        </authorList>
    </citation>
    <scope>NUCLEOTIDE SEQUENCE [LARGE SCALE GENOMIC DNA]</scope>
    <source>
        <strain>HAW-EB3</strain>
    </source>
</reference>
<name>ARNT_SHESH</name>
<sequence>MDKSKINLAVIVPLFFIMLYLLPLGLRDLWSPDELRYAEIAREMVDSGNWIVPTFNDIRYFEKPVMGHWMNAISQVLFGENNFSVRAASAFSTLGAAFCLFLLVGRFANRKQAWVTVSVFLSLFLVSNLGTYSVLDGMLNLWLTAAFTAFFYAADSPTTSQRCRFYGLAGLFCACALLTKGFLALALPVIVVVPFMIWQRQLVDILRWGWWVMLVALIVTLPWALAIHAAEPDYWHYFFWVEHIQRFAAEDAQHTSPAWYYLPYLLLGTLPWLFLAPSAIKHLKGHWQSPLLRYALLWALIPFIFFSAAKGKLVTYILPCMAPLAIILAQGIISAFENRAKGLKIGSVINCAFFSLISVAVIVLFYMGRLPLEAEEFYRPWLLVVVCGSWAVLAYISIKAKSLEGKIASYMLMPLSLFLLAWAIIPNISIDSKMPGRFLEQVSPLVSDDAILIADYPSTMSAFNWYFKRRDVYLTGNTGEVSYGIGYDDAKHKYVAPSLLGEFIRKQSVPVVILFREMDVPQSLPEPDKRIERGKFTLVYYDRVKR</sequence>
<keyword id="KW-0997">Cell inner membrane</keyword>
<keyword id="KW-1003">Cell membrane</keyword>
<keyword id="KW-0328">Glycosyltransferase</keyword>
<keyword id="KW-0441">Lipid A biosynthesis</keyword>
<keyword id="KW-0444">Lipid biosynthesis</keyword>
<keyword id="KW-0443">Lipid metabolism</keyword>
<keyword id="KW-0448">Lipopolysaccharide biosynthesis</keyword>
<keyword id="KW-0472">Membrane</keyword>
<keyword id="KW-1185">Reference proteome</keyword>
<keyword id="KW-0808">Transferase</keyword>
<keyword id="KW-0812">Transmembrane</keyword>
<keyword id="KW-1133">Transmembrane helix</keyword>
<proteinExistence type="inferred from homology"/>
<evidence type="ECO:0000255" key="1">
    <source>
        <dbReference type="HAMAP-Rule" id="MF_01165"/>
    </source>
</evidence>
<comment type="function">
    <text evidence="1">Catalyzes the transfer of the L-Ara4N moiety of the glycolipid undecaprenyl phosphate-alpha-L-Ara4N to lipid A. The modified arabinose is attached to lipid A and is required for resistance to polymyxin and cationic antimicrobial peptides.</text>
</comment>
<comment type="catalytic activity">
    <reaction evidence="1">
        <text>4-amino-4-deoxy-alpha-L-arabinopyranosyl di-trans,octa-cis-undecaprenyl phosphate + lipid IVA = lipid IIA + di-trans,octa-cis-undecaprenyl phosphate.</text>
        <dbReference type="EC" id="2.4.2.43"/>
    </reaction>
</comment>
<comment type="pathway">
    <text evidence="1">Lipopolysaccharide metabolism; 4-amino-4-deoxy-beta-L-arabinose-lipid A biosynthesis.</text>
</comment>
<comment type="subcellular location">
    <subcellularLocation>
        <location evidence="1">Cell inner membrane</location>
        <topology evidence="1">Multi-pass membrane protein</topology>
    </subcellularLocation>
</comment>
<comment type="similarity">
    <text evidence="1">Belongs to the glycosyltransferase 83 family.</text>
</comment>
<organism>
    <name type="scientific">Shewanella sediminis (strain HAW-EB3)</name>
    <dbReference type="NCBI Taxonomy" id="425104"/>
    <lineage>
        <taxon>Bacteria</taxon>
        <taxon>Pseudomonadati</taxon>
        <taxon>Pseudomonadota</taxon>
        <taxon>Gammaproteobacteria</taxon>
        <taxon>Alteromonadales</taxon>
        <taxon>Shewanellaceae</taxon>
        <taxon>Shewanella</taxon>
    </lineage>
</organism>
<accession>A8FRR0</accession>
<protein>
    <recommendedName>
        <fullName evidence="1">Undecaprenyl phosphate-alpha-4-amino-4-deoxy-L-arabinose arabinosyl transferase</fullName>
        <ecNumber evidence="1">2.4.2.43</ecNumber>
    </recommendedName>
    <alternativeName>
        <fullName evidence="1">4-amino-4-deoxy-L-arabinose lipid A transferase</fullName>
    </alternativeName>
    <alternativeName>
        <fullName evidence="1">Lipid IV(A) 4-amino-4-deoxy-L-arabinosyltransferase</fullName>
    </alternativeName>
    <alternativeName>
        <fullName evidence="1">Undecaprenyl phosphate-alpha-L-Ara4N transferase</fullName>
    </alternativeName>
</protein>